<name>SYS_ACTP2</name>
<proteinExistence type="inferred from homology"/>
<feature type="chain" id="PRO_1000019603" description="Serine--tRNA ligase">
    <location>
        <begin position="1"/>
        <end position="435"/>
    </location>
</feature>
<feature type="binding site" evidence="1">
    <location>
        <begin position="241"/>
        <end position="243"/>
    </location>
    <ligand>
        <name>L-serine</name>
        <dbReference type="ChEBI" id="CHEBI:33384"/>
    </ligand>
</feature>
<feature type="binding site" evidence="1">
    <location>
        <begin position="272"/>
        <end position="274"/>
    </location>
    <ligand>
        <name>ATP</name>
        <dbReference type="ChEBI" id="CHEBI:30616"/>
    </ligand>
</feature>
<feature type="binding site" evidence="1">
    <location>
        <position position="295"/>
    </location>
    <ligand>
        <name>L-serine</name>
        <dbReference type="ChEBI" id="CHEBI:33384"/>
    </ligand>
</feature>
<feature type="binding site" evidence="1">
    <location>
        <begin position="359"/>
        <end position="362"/>
    </location>
    <ligand>
        <name>ATP</name>
        <dbReference type="ChEBI" id="CHEBI:30616"/>
    </ligand>
</feature>
<feature type="binding site" evidence="1">
    <location>
        <position position="395"/>
    </location>
    <ligand>
        <name>L-serine</name>
        <dbReference type="ChEBI" id="CHEBI:33384"/>
    </ligand>
</feature>
<keyword id="KW-0030">Aminoacyl-tRNA synthetase</keyword>
<keyword id="KW-0067">ATP-binding</keyword>
<keyword id="KW-0963">Cytoplasm</keyword>
<keyword id="KW-0436">Ligase</keyword>
<keyword id="KW-0547">Nucleotide-binding</keyword>
<keyword id="KW-0648">Protein biosynthesis</keyword>
<keyword id="KW-1185">Reference proteome</keyword>
<gene>
    <name evidence="1" type="primary">serS</name>
    <name type="ordered locus">APL_0868</name>
</gene>
<evidence type="ECO:0000255" key="1">
    <source>
        <dbReference type="HAMAP-Rule" id="MF_00176"/>
    </source>
</evidence>
<comment type="function">
    <text evidence="1">Catalyzes the attachment of serine to tRNA(Ser). Is also able to aminoacylate tRNA(Sec) with serine, to form the misacylated tRNA L-seryl-tRNA(Sec), which will be further converted into selenocysteinyl-tRNA(Sec).</text>
</comment>
<comment type="catalytic activity">
    <reaction evidence="1">
        <text>tRNA(Ser) + L-serine + ATP = L-seryl-tRNA(Ser) + AMP + diphosphate + H(+)</text>
        <dbReference type="Rhea" id="RHEA:12292"/>
        <dbReference type="Rhea" id="RHEA-COMP:9669"/>
        <dbReference type="Rhea" id="RHEA-COMP:9703"/>
        <dbReference type="ChEBI" id="CHEBI:15378"/>
        <dbReference type="ChEBI" id="CHEBI:30616"/>
        <dbReference type="ChEBI" id="CHEBI:33019"/>
        <dbReference type="ChEBI" id="CHEBI:33384"/>
        <dbReference type="ChEBI" id="CHEBI:78442"/>
        <dbReference type="ChEBI" id="CHEBI:78533"/>
        <dbReference type="ChEBI" id="CHEBI:456215"/>
        <dbReference type="EC" id="6.1.1.11"/>
    </reaction>
</comment>
<comment type="catalytic activity">
    <reaction evidence="1">
        <text>tRNA(Sec) + L-serine + ATP = L-seryl-tRNA(Sec) + AMP + diphosphate + H(+)</text>
        <dbReference type="Rhea" id="RHEA:42580"/>
        <dbReference type="Rhea" id="RHEA-COMP:9742"/>
        <dbReference type="Rhea" id="RHEA-COMP:10128"/>
        <dbReference type="ChEBI" id="CHEBI:15378"/>
        <dbReference type="ChEBI" id="CHEBI:30616"/>
        <dbReference type="ChEBI" id="CHEBI:33019"/>
        <dbReference type="ChEBI" id="CHEBI:33384"/>
        <dbReference type="ChEBI" id="CHEBI:78442"/>
        <dbReference type="ChEBI" id="CHEBI:78533"/>
        <dbReference type="ChEBI" id="CHEBI:456215"/>
        <dbReference type="EC" id="6.1.1.11"/>
    </reaction>
</comment>
<comment type="pathway">
    <text evidence="1">Aminoacyl-tRNA biosynthesis; selenocysteinyl-tRNA(Sec) biosynthesis; L-seryl-tRNA(Sec) from L-serine and tRNA(Sec): step 1/1.</text>
</comment>
<comment type="subunit">
    <text evidence="1">Homodimer. The tRNA molecule binds across the dimer.</text>
</comment>
<comment type="subcellular location">
    <subcellularLocation>
        <location evidence="1">Cytoplasm</location>
    </subcellularLocation>
</comment>
<comment type="domain">
    <text evidence="1">Consists of two distinct domains, a catalytic core and a N-terminal extension that is involved in tRNA binding.</text>
</comment>
<comment type="similarity">
    <text evidence="1">Belongs to the class-II aminoacyl-tRNA synthetase family. Type-1 seryl-tRNA synthetase subfamily.</text>
</comment>
<accession>A3N0M8</accession>
<dbReference type="EC" id="6.1.1.11" evidence="1"/>
<dbReference type="EMBL" id="CP000569">
    <property type="protein sequence ID" value="ABN73964.1"/>
    <property type="molecule type" value="Genomic_DNA"/>
</dbReference>
<dbReference type="RefSeq" id="WP_009874613.1">
    <property type="nucleotide sequence ID" value="NC_009053.1"/>
</dbReference>
<dbReference type="SMR" id="A3N0M8"/>
<dbReference type="STRING" id="416269.APL_0868"/>
<dbReference type="EnsemblBacteria" id="ABN73964">
    <property type="protein sequence ID" value="ABN73964"/>
    <property type="gene ID" value="APL_0868"/>
</dbReference>
<dbReference type="KEGG" id="apl:APL_0868"/>
<dbReference type="PATRIC" id="fig|416269.6.peg.907"/>
<dbReference type="eggNOG" id="COG0172">
    <property type="taxonomic scope" value="Bacteria"/>
</dbReference>
<dbReference type="HOGENOM" id="CLU_023797_1_1_6"/>
<dbReference type="UniPathway" id="UPA00906">
    <property type="reaction ID" value="UER00895"/>
</dbReference>
<dbReference type="Proteomes" id="UP000001432">
    <property type="component" value="Chromosome"/>
</dbReference>
<dbReference type="GO" id="GO:0005737">
    <property type="term" value="C:cytoplasm"/>
    <property type="evidence" value="ECO:0007669"/>
    <property type="project" value="UniProtKB-SubCell"/>
</dbReference>
<dbReference type="GO" id="GO:0005524">
    <property type="term" value="F:ATP binding"/>
    <property type="evidence" value="ECO:0007669"/>
    <property type="project" value="UniProtKB-UniRule"/>
</dbReference>
<dbReference type="GO" id="GO:0004828">
    <property type="term" value="F:serine-tRNA ligase activity"/>
    <property type="evidence" value="ECO:0007669"/>
    <property type="project" value="UniProtKB-UniRule"/>
</dbReference>
<dbReference type="GO" id="GO:0016260">
    <property type="term" value="P:selenocysteine biosynthetic process"/>
    <property type="evidence" value="ECO:0007669"/>
    <property type="project" value="UniProtKB-UniRule"/>
</dbReference>
<dbReference type="GO" id="GO:0006434">
    <property type="term" value="P:seryl-tRNA aminoacylation"/>
    <property type="evidence" value="ECO:0007669"/>
    <property type="project" value="UniProtKB-UniRule"/>
</dbReference>
<dbReference type="CDD" id="cd00770">
    <property type="entry name" value="SerRS_core"/>
    <property type="match status" value="1"/>
</dbReference>
<dbReference type="Gene3D" id="3.30.930.10">
    <property type="entry name" value="Bira Bifunctional Protein, Domain 2"/>
    <property type="match status" value="1"/>
</dbReference>
<dbReference type="Gene3D" id="1.10.287.40">
    <property type="entry name" value="Serine-tRNA synthetase, tRNA binding domain"/>
    <property type="match status" value="1"/>
</dbReference>
<dbReference type="HAMAP" id="MF_00176">
    <property type="entry name" value="Ser_tRNA_synth_type1"/>
    <property type="match status" value="1"/>
</dbReference>
<dbReference type="InterPro" id="IPR002314">
    <property type="entry name" value="aa-tRNA-synt_IIb"/>
</dbReference>
<dbReference type="InterPro" id="IPR006195">
    <property type="entry name" value="aa-tRNA-synth_II"/>
</dbReference>
<dbReference type="InterPro" id="IPR045864">
    <property type="entry name" value="aa-tRNA-synth_II/BPL/LPL"/>
</dbReference>
<dbReference type="InterPro" id="IPR002317">
    <property type="entry name" value="Ser-tRNA-ligase_type_1"/>
</dbReference>
<dbReference type="InterPro" id="IPR015866">
    <property type="entry name" value="Ser-tRNA-synth_1_N"/>
</dbReference>
<dbReference type="InterPro" id="IPR042103">
    <property type="entry name" value="SerRS_1_N_sf"/>
</dbReference>
<dbReference type="InterPro" id="IPR033729">
    <property type="entry name" value="SerRS_core"/>
</dbReference>
<dbReference type="InterPro" id="IPR010978">
    <property type="entry name" value="tRNA-bd_arm"/>
</dbReference>
<dbReference type="NCBIfam" id="TIGR00414">
    <property type="entry name" value="serS"/>
    <property type="match status" value="1"/>
</dbReference>
<dbReference type="PANTHER" id="PTHR43697:SF1">
    <property type="entry name" value="SERINE--TRNA LIGASE"/>
    <property type="match status" value="1"/>
</dbReference>
<dbReference type="PANTHER" id="PTHR43697">
    <property type="entry name" value="SERYL-TRNA SYNTHETASE"/>
    <property type="match status" value="1"/>
</dbReference>
<dbReference type="Pfam" id="PF02403">
    <property type="entry name" value="Seryl_tRNA_N"/>
    <property type="match status" value="1"/>
</dbReference>
<dbReference type="Pfam" id="PF00587">
    <property type="entry name" value="tRNA-synt_2b"/>
    <property type="match status" value="1"/>
</dbReference>
<dbReference type="PIRSF" id="PIRSF001529">
    <property type="entry name" value="Ser-tRNA-synth_IIa"/>
    <property type="match status" value="1"/>
</dbReference>
<dbReference type="PRINTS" id="PR00981">
    <property type="entry name" value="TRNASYNTHSER"/>
</dbReference>
<dbReference type="SUPFAM" id="SSF55681">
    <property type="entry name" value="Class II aaRS and biotin synthetases"/>
    <property type="match status" value="1"/>
</dbReference>
<dbReference type="SUPFAM" id="SSF46589">
    <property type="entry name" value="tRNA-binding arm"/>
    <property type="match status" value="1"/>
</dbReference>
<dbReference type="PROSITE" id="PS50862">
    <property type="entry name" value="AA_TRNA_LIGASE_II"/>
    <property type="match status" value="1"/>
</dbReference>
<protein>
    <recommendedName>
        <fullName evidence="1">Serine--tRNA ligase</fullName>
        <ecNumber evidence="1">6.1.1.11</ecNumber>
    </recommendedName>
    <alternativeName>
        <fullName evidence="1">Seryl-tRNA synthetase</fullName>
        <shortName evidence="1">SerRS</shortName>
    </alternativeName>
    <alternativeName>
        <fullName evidence="1">Seryl-tRNA(Ser/Sec) synthetase</fullName>
    </alternativeName>
</protein>
<reference key="1">
    <citation type="journal article" date="2008" name="J. Bacteriol.">
        <title>The complete genome sequence of Actinobacillus pleuropneumoniae L20 (serotype 5b).</title>
        <authorList>
            <person name="Foote S.J."/>
            <person name="Bosse J.T."/>
            <person name="Bouevitch A.B."/>
            <person name="Langford P.R."/>
            <person name="Young N.M."/>
            <person name="Nash J.H.E."/>
        </authorList>
    </citation>
    <scope>NUCLEOTIDE SEQUENCE [LARGE SCALE GENOMIC DNA]</scope>
    <source>
        <strain>L20</strain>
    </source>
</reference>
<sequence length="435" mass="48365">MIDQNLLRTNLDDVANALKVKRGFTLDVESVKALEEKRKALQVKTETLQAERNARSKNIGAAKARGEDISALLAEVDNMGNELNEAKVALDQVQAEIRELLLSVPNLPADEVPLGKDDTENLEVSRWGEPRQFDFEVKDHVALGEALNGLDFAAGVKLTASRFVVMKGKLARLHRALSQFMLDLHTEQHGYVETNVPFLVNHDTLFGTGQLPKFGEDLFHTQPLTGQDPNETQRPFSLIPTAEVPVTNLVRDEIIDENSLPLRYTAHTPCFRSEAGSYGRDTRGLIRMHQFEKVEMVQIVAPEKSMEALEELTGHAEKVLQLLGLPYRKVLLCTGDMGFGSAKTYDLEVWLPAQNTYREISSCSNMWDFQARRMSARCKAKGDKKTRLVHTLNGSGLAVGRTLVAVLENYQNADGSITVPEVLRPYMGGVEVITA</sequence>
<organism>
    <name type="scientific">Actinobacillus pleuropneumoniae serotype 5b (strain L20)</name>
    <dbReference type="NCBI Taxonomy" id="416269"/>
    <lineage>
        <taxon>Bacteria</taxon>
        <taxon>Pseudomonadati</taxon>
        <taxon>Pseudomonadota</taxon>
        <taxon>Gammaproteobacteria</taxon>
        <taxon>Pasteurellales</taxon>
        <taxon>Pasteurellaceae</taxon>
        <taxon>Actinobacillus</taxon>
    </lineage>
</organism>